<gene>
    <name evidence="1" type="primary">der</name>
    <name type="synonym">engA</name>
    <name type="ordered locus">RrIowa_1225</name>
</gene>
<keyword id="KW-0342">GTP-binding</keyword>
<keyword id="KW-0547">Nucleotide-binding</keyword>
<keyword id="KW-0677">Repeat</keyword>
<keyword id="KW-0690">Ribosome biogenesis</keyword>
<sequence>MTKQIITLVGRPNVGKSTLFNRLSIRKKAIVHDLPGVTRDRKYTDGKIGSFEFLLIDTPGLDEHPNSMGERLIEQTTKAILEADLICFMVDARSGILPDDKLLSSFVRKYNKPAILVVNKCEKAFDFDKEYYKLGFDSMIAISAEHGTGLIDLYDEIIAKLPEEESIETNIADPIKGDCLQIVVSGRPNAGKSTFINALINDERLLTGPEAGITRESIEIDWQYKNNHIKLIDTAGLRKKSTITESLEKLSASDTINSIKLANTVILMIDALAPLKQQDLNIASHVVNEGRSIVIVVNKWDLVKESEKEAFQEEFYYQINTHLPQVKGIPVLFISAINKQNIEQVLDACLKIYKIWNKKITTSKLNEWLNFTTEAHLLPLQKGGRRVRVKYMTQTKTRPPTFKLFSNNPEKITDSYTRYLVNNMREAFDMPGVPIRFTYVKTKNPYV</sequence>
<proteinExistence type="inferred from homology"/>
<name>DER_RICRO</name>
<protein>
    <recommendedName>
        <fullName evidence="1">GTPase Der</fullName>
    </recommendedName>
    <alternativeName>
        <fullName evidence="1">GTP-binding protein EngA</fullName>
    </alternativeName>
</protein>
<reference key="1">
    <citation type="journal article" date="2008" name="Infect. Immun.">
        <title>Genomic comparison of virulent Rickettsia rickettsii Sheila Smith and avirulent Rickettsia rickettsii Iowa.</title>
        <authorList>
            <person name="Ellison D.W."/>
            <person name="Clark T.R."/>
            <person name="Sturdevant D.E."/>
            <person name="Virtaneva K."/>
            <person name="Porcella S.F."/>
            <person name="Hackstadt T."/>
        </authorList>
    </citation>
    <scope>NUCLEOTIDE SEQUENCE [LARGE SCALE GENOMIC DNA]</scope>
    <source>
        <strain>Iowa</strain>
    </source>
</reference>
<feature type="chain" id="PRO_1000077668" description="GTPase Der">
    <location>
        <begin position="1"/>
        <end position="447"/>
    </location>
</feature>
<feature type="domain" description="EngA-type G 1">
    <location>
        <begin position="4"/>
        <end position="165"/>
    </location>
</feature>
<feature type="domain" description="EngA-type G 2">
    <location>
        <begin position="180"/>
        <end position="357"/>
    </location>
</feature>
<feature type="domain" description="KH-like" evidence="1">
    <location>
        <begin position="358"/>
        <end position="443"/>
    </location>
</feature>
<feature type="binding site" evidence="1">
    <location>
        <begin position="10"/>
        <end position="17"/>
    </location>
    <ligand>
        <name>GTP</name>
        <dbReference type="ChEBI" id="CHEBI:37565"/>
        <label>1</label>
    </ligand>
</feature>
<feature type="binding site" evidence="1">
    <location>
        <begin position="57"/>
        <end position="61"/>
    </location>
    <ligand>
        <name>GTP</name>
        <dbReference type="ChEBI" id="CHEBI:37565"/>
        <label>1</label>
    </ligand>
</feature>
<feature type="binding site" evidence="1">
    <location>
        <begin position="119"/>
        <end position="122"/>
    </location>
    <ligand>
        <name>GTP</name>
        <dbReference type="ChEBI" id="CHEBI:37565"/>
        <label>1</label>
    </ligand>
</feature>
<feature type="binding site" evidence="1">
    <location>
        <begin position="186"/>
        <end position="193"/>
    </location>
    <ligand>
        <name>GTP</name>
        <dbReference type="ChEBI" id="CHEBI:37565"/>
        <label>2</label>
    </ligand>
</feature>
<feature type="binding site" evidence="1">
    <location>
        <begin position="233"/>
        <end position="237"/>
    </location>
    <ligand>
        <name>GTP</name>
        <dbReference type="ChEBI" id="CHEBI:37565"/>
        <label>2</label>
    </ligand>
</feature>
<feature type="binding site" evidence="1">
    <location>
        <begin position="298"/>
        <end position="301"/>
    </location>
    <ligand>
        <name>GTP</name>
        <dbReference type="ChEBI" id="CHEBI:37565"/>
        <label>2</label>
    </ligand>
</feature>
<organism>
    <name type="scientific">Rickettsia rickettsii (strain Iowa)</name>
    <dbReference type="NCBI Taxonomy" id="452659"/>
    <lineage>
        <taxon>Bacteria</taxon>
        <taxon>Pseudomonadati</taxon>
        <taxon>Pseudomonadota</taxon>
        <taxon>Alphaproteobacteria</taxon>
        <taxon>Rickettsiales</taxon>
        <taxon>Rickettsiaceae</taxon>
        <taxon>Rickettsieae</taxon>
        <taxon>Rickettsia</taxon>
        <taxon>spotted fever group</taxon>
    </lineage>
</organism>
<accession>B0BUT3</accession>
<dbReference type="EMBL" id="CP000766">
    <property type="protein sequence ID" value="ABY72993.1"/>
    <property type="molecule type" value="Genomic_DNA"/>
</dbReference>
<dbReference type="RefSeq" id="WP_012262543.1">
    <property type="nucleotide sequence ID" value="NC_010263.3"/>
</dbReference>
<dbReference type="SMR" id="B0BUT3"/>
<dbReference type="KEGG" id="rrj:RrIowa_1225"/>
<dbReference type="eggNOG" id="COG1160">
    <property type="taxonomic scope" value="Bacteria"/>
</dbReference>
<dbReference type="HOGENOM" id="CLU_016077_5_0_5"/>
<dbReference type="Proteomes" id="UP000000796">
    <property type="component" value="Chromosome"/>
</dbReference>
<dbReference type="GO" id="GO:0005525">
    <property type="term" value="F:GTP binding"/>
    <property type="evidence" value="ECO:0007669"/>
    <property type="project" value="UniProtKB-UniRule"/>
</dbReference>
<dbReference type="GO" id="GO:0042254">
    <property type="term" value="P:ribosome biogenesis"/>
    <property type="evidence" value="ECO:0007669"/>
    <property type="project" value="UniProtKB-KW"/>
</dbReference>
<dbReference type="CDD" id="cd01894">
    <property type="entry name" value="EngA1"/>
    <property type="match status" value="1"/>
</dbReference>
<dbReference type="CDD" id="cd01895">
    <property type="entry name" value="EngA2"/>
    <property type="match status" value="1"/>
</dbReference>
<dbReference type="FunFam" id="3.30.300.20:FF:000004">
    <property type="entry name" value="GTPase Der"/>
    <property type="match status" value="1"/>
</dbReference>
<dbReference type="Gene3D" id="3.30.300.20">
    <property type="match status" value="1"/>
</dbReference>
<dbReference type="Gene3D" id="3.40.50.300">
    <property type="entry name" value="P-loop containing nucleotide triphosphate hydrolases"/>
    <property type="match status" value="2"/>
</dbReference>
<dbReference type="HAMAP" id="MF_00195">
    <property type="entry name" value="GTPase_Der"/>
    <property type="match status" value="1"/>
</dbReference>
<dbReference type="InterPro" id="IPR031166">
    <property type="entry name" value="G_ENGA"/>
</dbReference>
<dbReference type="InterPro" id="IPR006073">
    <property type="entry name" value="GTP-bd"/>
</dbReference>
<dbReference type="InterPro" id="IPR016484">
    <property type="entry name" value="GTPase_Der"/>
</dbReference>
<dbReference type="InterPro" id="IPR032859">
    <property type="entry name" value="KH_dom-like"/>
</dbReference>
<dbReference type="InterPro" id="IPR015946">
    <property type="entry name" value="KH_dom-like_a/b"/>
</dbReference>
<dbReference type="InterPro" id="IPR027417">
    <property type="entry name" value="P-loop_NTPase"/>
</dbReference>
<dbReference type="InterPro" id="IPR005225">
    <property type="entry name" value="Small_GTP-bd"/>
</dbReference>
<dbReference type="NCBIfam" id="TIGR03594">
    <property type="entry name" value="GTPase_EngA"/>
    <property type="match status" value="1"/>
</dbReference>
<dbReference type="NCBIfam" id="TIGR00231">
    <property type="entry name" value="small_GTP"/>
    <property type="match status" value="2"/>
</dbReference>
<dbReference type="PANTHER" id="PTHR43834">
    <property type="entry name" value="GTPASE DER"/>
    <property type="match status" value="1"/>
</dbReference>
<dbReference type="PANTHER" id="PTHR43834:SF6">
    <property type="entry name" value="GTPASE DER"/>
    <property type="match status" value="1"/>
</dbReference>
<dbReference type="Pfam" id="PF14714">
    <property type="entry name" value="KH_dom-like"/>
    <property type="match status" value="1"/>
</dbReference>
<dbReference type="Pfam" id="PF01926">
    <property type="entry name" value="MMR_HSR1"/>
    <property type="match status" value="2"/>
</dbReference>
<dbReference type="PIRSF" id="PIRSF006485">
    <property type="entry name" value="GTP-binding_EngA"/>
    <property type="match status" value="1"/>
</dbReference>
<dbReference type="SUPFAM" id="SSF52540">
    <property type="entry name" value="P-loop containing nucleoside triphosphate hydrolases"/>
    <property type="match status" value="2"/>
</dbReference>
<dbReference type="PROSITE" id="PS51712">
    <property type="entry name" value="G_ENGA"/>
    <property type="match status" value="2"/>
</dbReference>
<evidence type="ECO:0000255" key="1">
    <source>
        <dbReference type="HAMAP-Rule" id="MF_00195"/>
    </source>
</evidence>
<comment type="function">
    <text evidence="1">GTPase that plays an essential role in the late steps of ribosome biogenesis.</text>
</comment>
<comment type="subunit">
    <text evidence="1">Associates with the 50S ribosomal subunit.</text>
</comment>
<comment type="similarity">
    <text evidence="1">Belongs to the TRAFAC class TrmE-Era-EngA-EngB-Septin-like GTPase superfamily. EngA (Der) GTPase family.</text>
</comment>